<feature type="chain" id="PRO_1000188074" description="Small ribosomal subunit biogenesis GTPase RsgA">
    <location>
        <begin position="1"/>
        <end position="350"/>
    </location>
</feature>
<feature type="domain" description="CP-type G" evidence="2">
    <location>
        <begin position="104"/>
        <end position="273"/>
    </location>
</feature>
<feature type="region of interest" description="Disordered" evidence="3">
    <location>
        <begin position="1"/>
        <end position="33"/>
    </location>
</feature>
<feature type="compositionally biased region" description="Polar residues" evidence="3">
    <location>
        <begin position="1"/>
        <end position="17"/>
    </location>
</feature>
<feature type="binding site" evidence="1">
    <location>
        <begin position="160"/>
        <end position="163"/>
    </location>
    <ligand>
        <name>GTP</name>
        <dbReference type="ChEBI" id="CHEBI:37565"/>
    </ligand>
</feature>
<feature type="binding site" evidence="1">
    <location>
        <begin position="214"/>
        <end position="222"/>
    </location>
    <ligand>
        <name>GTP</name>
        <dbReference type="ChEBI" id="CHEBI:37565"/>
    </ligand>
</feature>
<feature type="binding site" evidence="1">
    <location>
        <position position="297"/>
    </location>
    <ligand>
        <name>Zn(2+)</name>
        <dbReference type="ChEBI" id="CHEBI:29105"/>
    </ligand>
</feature>
<feature type="binding site" evidence="1">
    <location>
        <position position="302"/>
    </location>
    <ligand>
        <name>Zn(2+)</name>
        <dbReference type="ChEBI" id="CHEBI:29105"/>
    </ligand>
</feature>
<feature type="binding site" evidence="1">
    <location>
        <position position="304"/>
    </location>
    <ligand>
        <name>Zn(2+)</name>
        <dbReference type="ChEBI" id="CHEBI:29105"/>
    </ligand>
</feature>
<feature type="binding site" evidence="1">
    <location>
        <position position="310"/>
    </location>
    <ligand>
        <name>Zn(2+)</name>
        <dbReference type="ChEBI" id="CHEBI:29105"/>
    </ligand>
</feature>
<comment type="function">
    <text evidence="1">One of several proteins that assist in the late maturation steps of the functional core of the 30S ribosomal subunit. Helps release RbfA from mature subunits. May play a role in the assembly of ribosomal proteins into the subunit. Circularly permuted GTPase that catalyzes slow GTP hydrolysis, GTPase activity is stimulated by the 30S ribosomal subunit.</text>
</comment>
<comment type="cofactor">
    <cofactor evidence="1">
        <name>Zn(2+)</name>
        <dbReference type="ChEBI" id="CHEBI:29105"/>
    </cofactor>
    <text evidence="1">Binds 1 zinc ion per subunit.</text>
</comment>
<comment type="subunit">
    <text evidence="1">Monomer. Associates with 30S ribosomal subunit, binds 16S rRNA.</text>
</comment>
<comment type="subcellular location">
    <subcellularLocation>
        <location evidence="1">Cytoplasm</location>
    </subcellularLocation>
</comment>
<comment type="similarity">
    <text evidence="1">Belongs to the TRAFAC class YlqF/YawG GTPase family. RsgA subfamily.</text>
</comment>
<reference key="1">
    <citation type="journal article" date="2008" name="J. Bacteriol.">
        <title>Insights into the environmental resistance gene pool from the genome sequence of the multidrug-resistant environmental isolate Escherichia coli SMS-3-5.</title>
        <authorList>
            <person name="Fricke W.F."/>
            <person name="Wright M.S."/>
            <person name="Lindell A.H."/>
            <person name="Harkins D.M."/>
            <person name="Baker-Austin C."/>
            <person name="Ravel J."/>
            <person name="Stepanauskas R."/>
        </authorList>
    </citation>
    <scope>NUCLEOTIDE SEQUENCE [LARGE SCALE GENOMIC DNA]</scope>
    <source>
        <strain>SMS-3-5 / SECEC</strain>
    </source>
</reference>
<sequence>MSKNKLSKGQQRRVNANHQRRLKTSKEKPDYDDNLFGEPDEGIVISRFGMHADVESADGDVHRCNIRRTIRSLVTGDRVVWRPGKPAAEGVNVKGIVEAVHERTSVLTRPDFYDGVKPIAANIDQIVIVSAILPELSLNIIDRYLVACETLQIEPIIVLNKIDLLDDEGMKFVNEQMDIYRNIGYRVLMVSSHTQDGLKPLEEALTGRISIFAGQSGVGKSSLLNALLGLQKEILTNDVSDNSGLGQHTTTAARLYHFPHGGDVIDSPGVREFGLWHLEPEQITQGFVEFHDYLGLCKYRDCKHDTDPGCAIREAVEEGKIAETRFENYHRILESMAQVKTRKNFSDTDD</sequence>
<proteinExistence type="inferred from homology"/>
<name>RSGA_ECOSM</name>
<gene>
    <name evidence="1" type="primary">rsgA</name>
    <name type="ordered locus">EcSMS35_4632</name>
</gene>
<accession>B1LQI4</accession>
<evidence type="ECO:0000255" key="1">
    <source>
        <dbReference type="HAMAP-Rule" id="MF_01820"/>
    </source>
</evidence>
<evidence type="ECO:0000255" key="2">
    <source>
        <dbReference type="PROSITE-ProRule" id="PRU01058"/>
    </source>
</evidence>
<evidence type="ECO:0000256" key="3">
    <source>
        <dbReference type="SAM" id="MobiDB-lite"/>
    </source>
</evidence>
<organism>
    <name type="scientific">Escherichia coli (strain SMS-3-5 / SECEC)</name>
    <dbReference type="NCBI Taxonomy" id="439855"/>
    <lineage>
        <taxon>Bacteria</taxon>
        <taxon>Pseudomonadati</taxon>
        <taxon>Pseudomonadota</taxon>
        <taxon>Gammaproteobacteria</taxon>
        <taxon>Enterobacterales</taxon>
        <taxon>Enterobacteriaceae</taxon>
        <taxon>Escherichia</taxon>
    </lineage>
</organism>
<dbReference type="EC" id="3.6.1.-" evidence="1"/>
<dbReference type="EMBL" id="CP000970">
    <property type="protein sequence ID" value="ACB17381.1"/>
    <property type="molecule type" value="Genomic_DNA"/>
</dbReference>
<dbReference type="RefSeq" id="WP_000041980.1">
    <property type="nucleotide sequence ID" value="NC_010498.1"/>
</dbReference>
<dbReference type="SMR" id="B1LQI4"/>
<dbReference type="KEGG" id="ecm:EcSMS35_4632"/>
<dbReference type="HOGENOM" id="CLU_033617_2_0_6"/>
<dbReference type="Proteomes" id="UP000007011">
    <property type="component" value="Chromosome"/>
</dbReference>
<dbReference type="GO" id="GO:0005737">
    <property type="term" value="C:cytoplasm"/>
    <property type="evidence" value="ECO:0007669"/>
    <property type="project" value="UniProtKB-SubCell"/>
</dbReference>
<dbReference type="GO" id="GO:0005525">
    <property type="term" value="F:GTP binding"/>
    <property type="evidence" value="ECO:0007669"/>
    <property type="project" value="UniProtKB-UniRule"/>
</dbReference>
<dbReference type="GO" id="GO:0003924">
    <property type="term" value="F:GTPase activity"/>
    <property type="evidence" value="ECO:0007669"/>
    <property type="project" value="UniProtKB-UniRule"/>
</dbReference>
<dbReference type="GO" id="GO:0046872">
    <property type="term" value="F:metal ion binding"/>
    <property type="evidence" value="ECO:0007669"/>
    <property type="project" value="UniProtKB-KW"/>
</dbReference>
<dbReference type="GO" id="GO:0019843">
    <property type="term" value="F:rRNA binding"/>
    <property type="evidence" value="ECO:0007669"/>
    <property type="project" value="UniProtKB-KW"/>
</dbReference>
<dbReference type="GO" id="GO:0042274">
    <property type="term" value="P:ribosomal small subunit biogenesis"/>
    <property type="evidence" value="ECO:0007669"/>
    <property type="project" value="UniProtKB-UniRule"/>
</dbReference>
<dbReference type="CDD" id="cd01854">
    <property type="entry name" value="YjeQ_EngC"/>
    <property type="match status" value="1"/>
</dbReference>
<dbReference type="FunFam" id="1.10.40.50:FF:000001">
    <property type="entry name" value="Small ribosomal subunit biogenesis GTPase RsgA"/>
    <property type="match status" value="1"/>
</dbReference>
<dbReference type="FunFam" id="2.40.50.140:FF:000122">
    <property type="entry name" value="Small ribosomal subunit biogenesis GTPase RsgA"/>
    <property type="match status" value="1"/>
</dbReference>
<dbReference type="FunFam" id="3.40.50.300:FF:000389">
    <property type="entry name" value="Small ribosomal subunit biogenesis GTPase RsgA"/>
    <property type="match status" value="1"/>
</dbReference>
<dbReference type="Gene3D" id="2.40.50.140">
    <property type="entry name" value="Nucleic acid-binding proteins"/>
    <property type="match status" value="1"/>
</dbReference>
<dbReference type="Gene3D" id="3.40.50.300">
    <property type="entry name" value="P-loop containing nucleotide triphosphate hydrolases"/>
    <property type="match status" value="1"/>
</dbReference>
<dbReference type="Gene3D" id="1.10.40.50">
    <property type="entry name" value="Probable gtpase engc, domain 3"/>
    <property type="match status" value="1"/>
</dbReference>
<dbReference type="HAMAP" id="MF_01820">
    <property type="entry name" value="GTPase_RsgA"/>
    <property type="match status" value="1"/>
</dbReference>
<dbReference type="InterPro" id="IPR030378">
    <property type="entry name" value="G_CP_dom"/>
</dbReference>
<dbReference type="InterPro" id="IPR012340">
    <property type="entry name" value="NA-bd_OB-fold"/>
</dbReference>
<dbReference type="InterPro" id="IPR027417">
    <property type="entry name" value="P-loop_NTPase"/>
</dbReference>
<dbReference type="InterPro" id="IPR004881">
    <property type="entry name" value="Ribosome_biogen_GTPase_RsgA"/>
</dbReference>
<dbReference type="InterPro" id="IPR010914">
    <property type="entry name" value="RsgA_GTPase_dom"/>
</dbReference>
<dbReference type="NCBIfam" id="NF008931">
    <property type="entry name" value="PRK12288.1"/>
    <property type="match status" value="1"/>
</dbReference>
<dbReference type="NCBIfam" id="TIGR00157">
    <property type="entry name" value="ribosome small subunit-dependent GTPase A"/>
    <property type="match status" value="1"/>
</dbReference>
<dbReference type="PANTHER" id="PTHR32120">
    <property type="entry name" value="SMALL RIBOSOMAL SUBUNIT BIOGENESIS GTPASE RSGA"/>
    <property type="match status" value="1"/>
</dbReference>
<dbReference type="PANTHER" id="PTHR32120:SF11">
    <property type="entry name" value="SMALL RIBOSOMAL SUBUNIT BIOGENESIS GTPASE RSGA 1, MITOCHONDRIAL-RELATED"/>
    <property type="match status" value="1"/>
</dbReference>
<dbReference type="Pfam" id="PF03193">
    <property type="entry name" value="RsgA_GTPase"/>
    <property type="match status" value="1"/>
</dbReference>
<dbReference type="SUPFAM" id="SSF52540">
    <property type="entry name" value="P-loop containing nucleoside triphosphate hydrolases"/>
    <property type="match status" value="1"/>
</dbReference>
<dbReference type="PROSITE" id="PS50936">
    <property type="entry name" value="ENGC_GTPASE"/>
    <property type="match status" value="1"/>
</dbReference>
<dbReference type="PROSITE" id="PS51721">
    <property type="entry name" value="G_CP"/>
    <property type="match status" value="1"/>
</dbReference>
<protein>
    <recommendedName>
        <fullName evidence="1">Small ribosomal subunit biogenesis GTPase RsgA</fullName>
        <ecNumber evidence="1">3.6.1.-</ecNumber>
    </recommendedName>
</protein>
<keyword id="KW-0963">Cytoplasm</keyword>
<keyword id="KW-0342">GTP-binding</keyword>
<keyword id="KW-0378">Hydrolase</keyword>
<keyword id="KW-0479">Metal-binding</keyword>
<keyword id="KW-0547">Nucleotide-binding</keyword>
<keyword id="KW-0690">Ribosome biogenesis</keyword>
<keyword id="KW-0694">RNA-binding</keyword>
<keyword id="KW-0699">rRNA-binding</keyword>
<keyword id="KW-0862">Zinc</keyword>